<protein>
    <recommendedName>
        <fullName evidence="1">Large ribosomal subunit protein uL30</fullName>
    </recommendedName>
    <alternativeName>
        <fullName evidence="2">50S ribosomal protein L30</fullName>
    </alternativeName>
</protein>
<keyword id="KW-1185">Reference proteome</keyword>
<keyword id="KW-0687">Ribonucleoprotein</keyword>
<keyword id="KW-0689">Ribosomal protein</keyword>
<organism>
    <name type="scientific">Zymomonas mobilis subsp. mobilis (strain ATCC 31821 / ZM4 / CP4)</name>
    <dbReference type="NCBI Taxonomy" id="264203"/>
    <lineage>
        <taxon>Bacteria</taxon>
        <taxon>Pseudomonadati</taxon>
        <taxon>Pseudomonadota</taxon>
        <taxon>Alphaproteobacteria</taxon>
        <taxon>Sphingomonadales</taxon>
        <taxon>Zymomonadaceae</taxon>
        <taxon>Zymomonas</taxon>
    </lineage>
</organism>
<sequence>MATLKVTQIGSPIRRSPDQRATLIGLGLNKMHRTRELKDTPDVRGMLRKVAHLVKVEN</sequence>
<name>RL30_ZYMMO</name>
<accession>Q5NQ47</accession>
<feature type="chain" id="PRO_0000273900" description="Large ribosomal subunit protein uL30">
    <location>
        <begin position="1"/>
        <end position="58"/>
    </location>
</feature>
<gene>
    <name evidence="1" type="primary">rpmD</name>
    <name type="ordered locus">ZMO0534</name>
</gene>
<reference key="1">
    <citation type="journal article" date="2005" name="Nat. Biotechnol.">
        <title>The genome sequence of the ethanologenic bacterium Zymomonas mobilis ZM4.</title>
        <authorList>
            <person name="Seo J.-S."/>
            <person name="Chong H."/>
            <person name="Park H.S."/>
            <person name="Yoon K.-O."/>
            <person name="Jung C."/>
            <person name="Kim J.J."/>
            <person name="Hong J.H."/>
            <person name="Kim H."/>
            <person name="Kim J.-H."/>
            <person name="Kil J.-I."/>
            <person name="Park C.J."/>
            <person name="Oh H.-M."/>
            <person name="Lee J.-S."/>
            <person name="Jin S.-J."/>
            <person name="Um H.-W."/>
            <person name="Lee H.-J."/>
            <person name="Oh S.-J."/>
            <person name="Kim J.Y."/>
            <person name="Kang H.L."/>
            <person name="Lee S.Y."/>
            <person name="Lee K.J."/>
            <person name="Kang H.S."/>
        </authorList>
    </citation>
    <scope>NUCLEOTIDE SEQUENCE [LARGE SCALE GENOMIC DNA]</scope>
    <source>
        <strain>ATCC 31821 / ZM4 / CP4</strain>
    </source>
</reference>
<dbReference type="EMBL" id="AE008692">
    <property type="protein sequence ID" value="AAV89158.1"/>
    <property type="molecule type" value="Genomic_DNA"/>
</dbReference>
<dbReference type="RefSeq" id="WP_011240441.1">
    <property type="nucleotide sequence ID" value="NZ_CP035711.1"/>
</dbReference>
<dbReference type="SMR" id="Q5NQ47"/>
<dbReference type="STRING" id="264203.ZMO0534"/>
<dbReference type="GeneID" id="79904274"/>
<dbReference type="KEGG" id="zmo:ZMO0534"/>
<dbReference type="eggNOG" id="COG1841">
    <property type="taxonomic scope" value="Bacteria"/>
</dbReference>
<dbReference type="HOGENOM" id="CLU_131047_1_2_5"/>
<dbReference type="Proteomes" id="UP000001173">
    <property type="component" value="Chromosome"/>
</dbReference>
<dbReference type="GO" id="GO:0022625">
    <property type="term" value="C:cytosolic large ribosomal subunit"/>
    <property type="evidence" value="ECO:0007669"/>
    <property type="project" value="TreeGrafter"/>
</dbReference>
<dbReference type="GO" id="GO:0003735">
    <property type="term" value="F:structural constituent of ribosome"/>
    <property type="evidence" value="ECO:0007669"/>
    <property type="project" value="InterPro"/>
</dbReference>
<dbReference type="GO" id="GO:0006412">
    <property type="term" value="P:translation"/>
    <property type="evidence" value="ECO:0007669"/>
    <property type="project" value="UniProtKB-UniRule"/>
</dbReference>
<dbReference type="CDD" id="cd01658">
    <property type="entry name" value="Ribosomal_L30"/>
    <property type="match status" value="1"/>
</dbReference>
<dbReference type="Gene3D" id="3.30.1390.20">
    <property type="entry name" value="Ribosomal protein L30, ferredoxin-like fold domain"/>
    <property type="match status" value="1"/>
</dbReference>
<dbReference type="HAMAP" id="MF_01371_B">
    <property type="entry name" value="Ribosomal_uL30_B"/>
    <property type="match status" value="1"/>
</dbReference>
<dbReference type="InterPro" id="IPR036919">
    <property type="entry name" value="Ribo_uL30_ferredoxin-like_sf"/>
</dbReference>
<dbReference type="InterPro" id="IPR005996">
    <property type="entry name" value="Ribosomal_uL30_bac-type"/>
</dbReference>
<dbReference type="InterPro" id="IPR016082">
    <property type="entry name" value="Ribosomal_uL30_ferredoxin-like"/>
</dbReference>
<dbReference type="NCBIfam" id="TIGR01308">
    <property type="entry name" value="rpmD_bact"/>
    <property type="match status" value="1"/>
</dbReference>
<dbReference type="PANTHER" id="PTHR15892:SF2">
    <property type="entry name" value="LARGE RIBOSOMAL SUBUNIT PROTEIN UL30M"/>
    <property type="match status" value="1"/>
</dbReference>
<dbReference type="PANTHER" id="PTHR15892">
    <property type="entry name" value="MITOCHONDRIAL RIBOSOMAL PROTEIN L30"/>
    <property type="match status" value="1"/>
</dbReference>
<dbReference type="Pfam" id="PF00327">
    <property type="entry name" value="Ribosomal_L30"/>
    <property type="match status" value="1"/>
</dbReference>
<dbReference type="PIRSF" id="PIRSF002211">
    <property type="entry name" value="Ribosomal_L30_bac-type"/>
    <property type="match status" value="1"/>
</dbReference>
<dbReference type="SUPFAM" id="SSF55129">
    <property type="entry name" value="Ribosomal protein L30p/L7e"/>
    <property type="match status" value="1"/>
</dbReference>
<evidence type="ECO:0000255" key="1">
    <source>
        <dbReference type="HAMAP-Rule" id="MF_01371"/>
    </source>
</evidence>
<evidence type="ECO:0000305" key="2"/>
<proteinExistence type="inferred from homology"/>
<comment type="subunit">
    <text evidence="1">Part of the 50S ribosomal subunit.</text>
</comment>
<comment type="similarity">
    <text evidence="1">Belongs to the universal ribosomal protein uL30 family.</text>
</comment>